<feature type="chain" id="PRO_0000111430" description="Small ribosomal subunit protein uS9">
    <location>
        <begin position="1"/>
        <end position="128"/>
    </location>
</feature>
<feature type="strand" evidence="4">
    <location>
        <begin position="4"/>
        <end position="6"/>
    </location>
</feature>
<feature type="strand" evidence="4">
    <location>
        <begin position="13"/>
        <end position="19"/>
    </location>
</feature>
<feature type="strand" evidence="4">
    <location>
        <begin position="21"/>
        <end position="23"/>
    </location>
</feature>
<feature type="strand" evidence="4">
    <location>
        <begin position="26"/>
        <end position="28"/>
    </location>
</feature>
<feature type="helix" evidence="4">
    <location>
        <begin position="33"/>
        <end position="36"/>
    </location>
</feature>
<feature type="turn" evidence="4">
    <location>
        <begin position="37"/>
        <end position="39"/>
    </location>
</feature>
<feature type="helix" evidence="4">
    <location>
        <begin position="43"/>
        <end position="45"/>
    </location>
</feature>
<feature type="helix" evidence="4">
    <location>
        <begin position="48"/>
        <end position="52"/>
    </location>
</feature>
<feature type="strand" evidence="3">
    <location>
        <begin position="56"/>
        <end position="58"/>
    </location>
</feature>
<feature type="strand" evidence="4">
    <location>
        <begin position="61"/>
        <end position="68"/>
    </location>
</feature>
<feature type="helix" evidence="4">
    <location>
        <begin position="70"/>
        <end position="88"/>
    </location>
</feature>
<feature type="turn" evidence="4">
    <location>
        <begin position="90"/>
        <end position="99"/>
    </location>
</feature>
<feature type="strand" evidence="3">
    <location>
        <begin position="101"/>
        <end position="103"/>
    </location>
</feature>
<feature type="strand" evidence="4">
    <location>
        <begin position="116"/>
        <end position="118"/>
    </location>
</feature>
<dbReference type="EMBL" id="AJ409331">
    <property type="protein sequence ID" value="CAC35063.1"/>
    <property type="molecule type" value="Genomic_DNA"/>
</dbReference>
<dbReference type="EMBL" id="AE017221">
    <property type="protein sequence ID" value="AAS81442.1"/>
    <property type="molecule type" value="Genomic_DNA"/>
</dbReference>
<dbReference type="RefSeq" id="WP_008632991.1">
    <property type="nucleotide sequence ID" value="NC_005835.1"/>
</dbReference>
<dbReference type="PDB" id="1I94">
    <property type="method" value="X-ray"/>
    <property type="resolution" value="3.20 A"/>
    <property type="chains" value="I=1-128"/>
</dbReference>
<dbReference type="PDB" id="1I96">
    <property type="method" value="X-ray"/>
    <property type="resolution" value="4.20 A"/>
    <property type="chains" value="I=1-128"/>
</dbReference>
<dbReference type="PDB" id="2R1G">
    <property type="method" value="EM"/>
    <property type="resolution" value="12.50 A"/>
    <property type="chains" value="G=2-128"/>
</dbReference>
<dbReference type="PDB" id="2UXB">
    <property type="method" value="X-ray"/>
    <property type="resolution" value="3.10 A"/>
    <property type="chains" value="I=1-128"/>
</dbReference>
<dbReference type="PDB" id="2UXC">
    <property type="method" value="X-ray"/>
    <property type="resolution" value="2.90 A"/>
    <property type="chains" value="I=1-128"/>
</dbReference>
<dbReference type="PDB" id="2UXD">
    <property type="method" value="X-ray"/>
    <property type="resolution" value="3.20 A"/>
    <property type="chains" value="I=1-128"/>
</dbReference>
<dbReference type="PDB" id="2VQE">
    <property type="method" value="X-ray"/>
    <property type="resolution" value="2.50 A"/>
    <property type="chains" value="I=1-128"/>
</dbReference>
<dbReference type="PDB" id="2VQF">
    <property type="method" value="X-ray"/>
    <property type="resolution" value="2.90 A"/>
    <property type="chains" value="I=1-128"/>
</dbReference>
<dbReference type="PDB" id="3T1H">
    <property type="method" value="X-ray"/>
    <property type="resolution" value="3.11 A"/>
    <property type="chains" value="I=1-128"/>
</dbReference>
<dbReference type="PDB" id="3T1Y">
    <property type="method" value="X-ray"/>
    <property type="resolution" value="2.80 A"/>
    <property type="chains" value="I=1-128"/>
</dbReference>
<dbReference type="PDB" id="4KVB">
    <property type="method" value="X-ray"/>
    <property type="resolution" value="4.20 A"/>
    <property type="chains" value="I=1-128"/>
</dbReference>
<dbReference type="PDB" id="4V4I">
    <property type="method" value="X-ray"/>
    <property type="resolution" value="3.71 A"/>
    <property type="chains" value="j=1-128"/>
</dbReference>
<dbReference type="PDB" id="4V4J">
    <property type="method" value="X-ray"/>
    <property type="resolution" value="3.83 A"/>
    <property type="chains" value="j=1-128"/>
</dbReference>
<dbReference type="PDB" id="4V51">
    <property type="method" value="X-ray"/>
    <property type="resolution" value="2.80 A"/>
    <property type="chains" value="AI/CI=1-128"/>
</dbReference>
<dbReference type="PDB" id="4V5A">
    <property type="method" value="X-ray"/>
    <property type="resolution" value="3.50 A"/>
    <property type="chains" value="AI/CI=1-128"/>
</dbReference>
<dbReference type="PDB" id="4V5C">
    <property type="method" value="X-ray"/>
    <property type="resolution" value="3.30 A"/>
    <property type="chains" value="AI/CI=1-128"/>
</dbReference>
<dbReference type="PDB" id="4V5D">
    <property type="method" value="X-ray"/>
    <property type="resolution" value="3.50 A"/>
    <property type="chains" value="AI/CI=1-128"/>
</dbReference>
<dbReference type="PDB" id="4V63">
    <property type="method" value="X-ray"/>
    <property type="resolution" value="3.21 A"/>
    <property type="chains" value="AI/CI=1-128"/>
</dbReference>
<dbReference type="PDB" id="4V67">
    <property type="method" value="X-ray"/>
    <property type="resolution" value="3.00 A"/>
    <property type="chains" value="AI/CI=1-128"/>
</dbReference>
<dbReference type="PDB" id="4V7P">
    <property type="method" value="X-ray"/>
    <property type="resolution" value="3.62 A"/>
    <property type="chains" value="AI/DI=2-128"/>
</dbReference>
<dbReference type="PDB" id="4V83">
    <property type="method" value="X-ray"/>
    <property type="resolution" value="3.50 A"/>
    <property type="chains" value="AI/CI=2-128"/>
</dbReference>
<dbReference type="PDB" id="4V84">
    <property type="method" value="X-ray"/>
    <property type="resolution" value="3.40 A"/>
    <property type="chains" value="AI/CI=2-128"/>
</dbReference>
<dbReference type="PDB" id="4V9J">
    <property type="method" value="X-ray"/>
    <property type="resolution" value="3.86 A"/>
    <property type="chains" value="AI/CI=2-128"/>
</dbReference>
<dbReference type="PDB" id="4V9K">
    <property type="method" value="X-ray"/>
    <property type="resolution" value="3.50 A"/>
    <property type="chains" value="AI/CI=2-128"/>
</dbReference>
<dbReference type="PDB" id="4V9L">
    <property type="method" value="X-ray"/>
    <property type="resolution" value="3.50 A"/>
    <property type="chains" value="AI/CI=2-128"/>
</dbReference>
<dbReference type="PDB" id="4V9M">
    <property type="method" value="X-ray"/>
    <property type="resolution" value="4.00 A"/>
    <property type="chains" value="AI/CI=2-128"/>
</dbReference>
<dbReference type="PDB" id="4V9N">
    <property type="method" value="X-ray"/>
    <property type="resolution" value="3.40 A"/>
    <property type="chains" value="AI/CI=2-128"/>
</dbReference>
<dbReference type="PDB" id="4V9Q">
    <property type="method" value="X-ray"/>
    <property type="resolution" value="3.40 A"/>
    <property type="chains" value="BI/DI=2-128"/>
</dbReference>
<dbReference type="PDB" id="4W29">
    <property type="method" value="X-ray"/>
    <property type="resolution" value="3.80 A"/>
    <property type="chains" value="AI/CI=2-128"/>
</dbReference>
<dbReference type="PDB" id="4XEJ">
    <property type="method" value="X-ray"/>
    <property type="resolution" value="3.80 A"/>
    <property type="chains" value="AS09/BS09=2-128"/>
</dbReference>
<dbReference type="PDB" id="5J4D">
    <property type="method" value="X-ray"/>
    <property type="resolution" value="3.10 A"/>
    <property type="chains" value="RA/WC=1-128"/>
</dbReference>
<dbReference type="PDB" id="5V8I">
    <property type="method" value="X-ray"/>
    <property type="resolution" value="3.25 A"/>
    <property type="chains" value="1i/2i=1-128"/>
</dbReference>
<dbReference type="PDB" id="6B4V">
    <property type="method" value="X-ray"/>
    <property type="resolution" value="3.40 A"/>
    <property type="chains" value="RA/VC=1-128"/>
</dbReference>
<dbReference type="PDB" id="6BOH">
    <property type="method" value="X-ray"/>
    <property type="resolution" value="3.40 A"/>
    <property type="chains" value="SA/XC=1-128"/>
</dbReference>
<dbReference type="PDB" id="6BOK">
    <property type="method" value="X-ray"/>
    <property type="resolution" value="3.55 A"/>
    <property type="chains" value="QA/TC=1-128"/>
</dbReference>
<dbReference type="PDB" id="6N1D">
    <property type="method" value="X-ray"/>
    <property type="resolution" value="3.20 A"/>
    <property type="chains" value="AS09/BS09=1-128"/>
</dbReference>
<dbReference type="PDBsum" id="1I94"/>
<dbReference type="PDBsum" id="1I96"/>
<dbReference type="PDBsum" id="2R1G"/>
<dbReference type="PDBsum" id="2UXB"/>
<dbReference type="PDBsum" id="2UXC"/>
<dbReference type="PDBsum" id="2UXD"/>
<dbReference type="PDBsum" id="2VQE"/>
<dbReference type="PDBsum" id="2VQF"/>
<dbReference type="PDBsum" id="3T1H"/>
<dbReference type="PDBsum" id="3T1Y"/>
<dbReference type="PDBsum" id="4KVB"/>
<dbReference type="PDBsum" id="4V4I"/>
<dbReference type="PDBsum" id="4V4J"/>
<dbReference type="PDBsum" id="4V51"/>
<dbReference type="PDBsum" id="4V5A"/>
<dbReference type="PDBsum" id="4V5C"/>
<dbReference type="PDBsum" id="4V5D"/>
<dbReference type="PDBsum" id="4V63"/>
<dbReference type="PDBsum" id="4V67"/>
<dbReference type="PDBsum" id="4V7P"/>
<dbReference type="PDBsum" id="4V83"/>
<dbReference type="PDBsum" id="4V84"/>
<dbReference type="PDBsum" id="4V9J"/>
<dbReference type="PDBsum" id="4V9K"/>
<dbReference type="PDBsum" id="4V9L"/>
<dbReference type="PDBsum" id="4V9M"/>
<dbReference type="PDBsum" id="4V9N"/>
<dbReference type="PDBsum" id="4V9Q"/>
<dbReference type="PDBsum" id="4W29"/>
<dbReference type="PDBsum" id="4XEJ"/>
<dbReference type="PDBsum" id="5J4D"/>
<dbReference type="PDBsum" id="5V8I"/>
<dbReference type="PDBsum" id="6B4V"/>
<dbReference type="PDBsum" id="6BOH"/>
<dbReference type="PDBsum" id="6BOK"/>
<dbReference type="PDBsum" id="6N1D"/>
<dbReference type="SMR" id="P62669"/>
<dbReference type="IntAct" id="P62669">
    <property type="interactions" value="5"/>
</dbReference>
<dbReference type="DrugBank" id="DB08185">
    <property type="generic name" value="2-METHYLTHIO-N6-ISOPENTENYL-ADENOSINE-5'-MONOPHOSPHATE"/>
</dbReference>
<dbReference type="KEGG" id="tth:TT_C1100"/>
<dbReference type="eggNOG" id="COG0103">
    <property type="taxonomic scope" value="Bacteria"/>
</dbReference>
<dbReference type="HOGENOM" id="CLU_046483_2_1_0"/>
<dbReference type="OrthoDB" id="9803965at2"/>
<dbReference type="EvolutionaryTrace" id="P62669"/>
<dbReference type="Proteomes" id="UP000000592">
    <property type="component" value="Chromosome"/>
</dbReference>
<dbReference type="GO" id="GO:0022627">
    <property type="term" value="C:cytosolic small ribosomal subunit"/>
    <property type="evidence" value="ECO:0007669"/>
    <property type="project" value="TreeGrafter"/>
</dbReference>
<dbReference type="GO" id="GO:0019843">
    <property type="term" value="F:rRNA binding"/>
    <property type="evidence" value="ECO:0007669"/>
    <property type="project" value="UniProtKB-KW"/>
</dbReference>
<dbReference type="GO" id="GO:0003735">
    <property type="term" value="F:structural constituent of ribosome"/>
    <property type="evidence" value="ECO:0007669"/>
    <property type="project" value="InterPro"/>
</dbReference>
<dbReference type="GO" id="GO:0000049">
    <property type="term" value="F:tRNA binding"/>
    <property type="evidence" value="ECO:0007669"/>
    <property type="project" value="UniProtKB-KW"/>
</dbReference>
<dbReference type="GO" id="GO:0006412">
    <property type="term" value="P:translation"/>
    <property type="evidence" value="ECO:0007669"/>
    <property type="project" value="UniProtKB-UniRule"/>
</dbReference>
<dbReference type="FunFam" id="3.30.230.10:FF:000001">
    <property type="entry name" value="30S ribosomal protein S9"/>
    <property type="match status" value="1"/>
</dbReference>
<dbReference type="Gene3D" id="3.30.230.10">
    <property type="match status" value="1"/>
</dbReference>
<dbReference type="HAMAP" id="MF_00532_B">
    <property type="entry name" value="Ribosomal_uS9_B"/>
    <property type="match status" value="1"/>
</dbReference>
<dbReference type="InterPro" id="IPR020568">
    <property type="entry name" value="Ribosomal_Su5_D2-typ_SF"/>
</dbReference>
<dbReference type="InterPro" id="IPR000754">
    <property type="entry name" value="Ribosomal_uS9"/>
</dbReference>
<dbReference type="InterPro" id="IPR023035">
    <property type="entry name" value="Ribosomal_uS9_bac/plastid"/>
</dbReference>
<dbReference type="InterPro" id="IPR020574">
    <property type="entry name" value="Ribosomal_uS9_CS"/>
</dbReference>
<dbReference type="InterPro" id="IPR014721">
    <property type="entry name" value="Ribsml_uS5_D2-typ_fold_subgr"/>
</dbReference>
<dbReference type="NCBIfam" id="NF001099">
    <property type="entry name" value="PRK00132.1"/>
    <property type="match status" value="1"/>
</dbReference>
<dbReference type="PANTHER" id="PTHR21569">
    <property type="entry name" value="RIBOSOMAL PROTEIN S9"/>
    <property type="match status" value="1"/>
</dbReference>
<dbReference type="PANTHER" id="PTHR21569:SF1">
    <property type="entry name" value="SMALL RIBOSOMAL SUBUNIT PROTEIN US9M"/>
    <property type="match status" value="1"/>
</dbReference>
<dbReference type="Pfam" id="PF00380">
    <property type="entry name" value="Ribosomal_S9"/>
    <property type="match status" value="1"/>
</dbReference>
<dbReference type="SUPFAM" id="SSF54211">
    <property type="entry name" value="Ribosomal protein S5 domain 2-like"/>
    <property type="match status" value="1"/>
</dbReference>
<dbReference type="PROSITE" id="PS00360">
    <property type="entry name" value="RIBOSOMAL_S9"/>
    <property type="match status" value="1"/>
</dbReference>
<protein>
    <recommendedName>
        <fullName evidence="2">Small ribosomal subunit protein uS9</fullName>
    </recommendedName>
    <alternativeName>
        <fullName>30S ribosomal protein S9</fullName>
    </alternativeName>
</protein>
<comment type="function">
    <text evidence="1">Part of the top of the head of the 30S subunit. The C-terminal region penetrates the head emerging in the P-site where it contacts tRNA (By similarity).</text>
</comment>
<comment type="subunit">
    <text evidence="1">Part of the 30S ribosomal subunit. Contacts proteins S7 and S10 (By similarity).</text>
</comment>
<comment type="similarity">
    <text evidence="2">Belongs to the universal ribosomal protein uS9 family.</text>
</comment>
<accession>P62669</accession>
<reference key="1">
    <citation type="journal article" date="2001" name="EMBO J.">
        <title>Crystal structures of complexes of the small ribosomal subunit with tetracycline, edeine and IF3.</title>
        <authorList>
            <person name="Pioletti M."/>
            <person name="Schluenzen F."/>
            <person name="Harms J."/>
            <person name="Zarivach R."/>
            <person name="Gluehmann M."/>
            <person name="Avila H."/>
            <person name="Bashan A."/>
            <person name="Bartels H."/>
            <person name="Auerbach T."/>
            <person name="Jacobi C."/>
            <person name="Hartsch T."/>
            <person name="Yonath A."/>
            <person name="Franceschi F."/>
        </authorList>
    </citation>
    <scope>NUCLEOTIDE SEQUENCE [GENOMIC DNA]</scope>
</reference>
<reference key="2">
    <citation type="journal article" date="2004" name="Nat. Biotechnol.">
        <title>The genome sequence of the extreme thermophile Thermus thermophilus.</title>
        <authorList>
            <person name="Henne A."/>
            <person name="Brueggemann H."/>
            <person name="Raasch C."/>
            <person name="Wiezer A."/>
            <person name="Hartsch T."/>
            <person name="Liesegang H."/>
            <person name="Johann A."/>
            <person name="Lienard T."/>
            <person name="Gohl O."/>
            <person name="Martinez-Arias R."/>
            <person name="Jacobi C."/>
            <person name="Starkuviene V."/>
            <person name="Schlenczeck S."/>
            <person name="Dencker S."/>
            <person name="Huber R."/>
            <person name="Klenk H.-P."/>
            <person name="Kramer W."/>
            <person name="Merkl R."/>
            <person name="Gottschalk G."/>
            <person name="Fritz H.-J."/>
        </authorList>
    </citation>
    <scope>NUCLEOTIDE SEQUENCE [LARGE SCALE GENOMIC DNA]</scope>
    <source>
        <strain>ATCC BAA-163 / DSM 7039 / HB27</strain>
    </source>
</reference>
<sequence length="128" mass="14402">MEQYYGTGRRKEAVARVFLRPGNGKVTVNGQDFNEYFQGLVRAVAALEPLRAVDALGRFDAYITVRGGGKSGQIDAIKLGIARALVQYNPDYRAKLKPLGFLTRDARVVERKKYGKHKARRAPQYSKR</sequence>
<name>RS9_THET2</name>
<evidence type="ECO:0000250" key="1"/>
<evidence type="ECO:0000305" key="2"/>
<evidence type="ECO:0007829" key="3">
    <source>
        <dbReference type="PDB" id="3T1H"/>
    </source>
</evidence>
<evidence type="ECO:0007829" key="4">
    <source>
        <dbReference type="PDB" id="3T1Y"/>
    </source>
</evidence>
<proteinExistence type="evidence at protein level"/>
<keyword id="KW-0002">3D-structure</keyword>
<keyword id="KW-0687">Ribonucleoprotein</keyword>
<keyword id="KW-0689">Ribosomal protein</keyword>
<keyword id="KW-0694">RNA-binding</keyword>
<keyword id="KW-0699">rRNA-binding</keyword>
<keyword id="KW-0820">tRNA-binding</keyword>
<organism>
    <name type="scientific">Thermus thermophilus (strain ATCC BAA-163 / DSM 7039 / HB27)</name>
    <dbReference type="NCBI Taxonomy" id="262724"/>
    <lineage>
        <taxon>Bacteria</taxon>
        <taxon>Thermotogati</taxon>
        <taxon>Deinococcota</taxon>
        <taxon>Deinococci</taxon>
        <taxon>Thermales</taxon>
        <taxon>Thermaceae</taxon>
        <taxon>Thermus</taxon>
    </lineage>
</organism>
<gene>
    <name type="primary">rpsI</name>
    <name type="synonym">rps9</name>
    <name type="ordered locus">TT_C1100</name>
</gene>